<evidence type="ECO:0000255" key="1">
    <source>
        <dbReference type="PROSITE-ProRule" id="PRU10092"/>
    </source>
</evidence>
<evidence type="ECO:0000255" key="2">
    <source>
        <dbReference type="PROSITE-ProRule" id="PRU10093"/>
    </source>
</evidence>
<evidence type="ECO:0000256" key="3">
    <source>
        <dbReference type="SAM" id="MobiDB-lite"/>
    </source>
</evidence>
<evidence type="ECO:0000305" key="4"/>
<reference key="1">
    <citation type="journal article" date="2005" name="Nature">
        <title>Sequencing of Aspergillus nidulans and comparative analysis with A. fumigatus and A. oryzae.</title>
        <authorList>
            <person name="Galagan J.E."/>
            <person name="Calvo S.E."/>
            <person name="Cuomo C."/>
            <person name="Ma L.-J."/>
            <person name="Wortman J.R."/>
            <person name="Batzoglou S."/>
            <person name="Lee S.-I."/>
            <person name="Bastuerkmen M."/>
            <person name="Spevak C.C."/>
            <person name="Clutterbuck J."/>
            <person name="Kapitonov V."/>
            <person name="Jurka J."/>
            <person name="Scazzocchio C."/>
            <person name="Farman M.L."/>
            <person name="Butler J."/>
            <person name="Purcell S."/>
            <person name="Harris S."/>
            <person name="Braus G.H."/>
            <person name="Draht O."/>
            <person name="Busch S."/>
            <person name="D'Enfert C."/>
            <person name="Bouchier C."/>
            <person name="Goldman G.H."/>
            <person name="Bell-Pedersen D."/>
            <person name="Griffiths-Jones S."/>
            <person name="Doonan J.H."/>
            <person name="Yu J."/>
            <person name="Vienken K."/>
            <person name="Pain A."/>
            <person name="Freitag M."/>
            <person name="Selker E.U."/>
            <person name="Archer D.B."/>
            <person name="Penalva M.A."/>
            <person name="Oakley B.R."/>
            <person name="Momany M."/>
            <person name="Tanaka T."/>
            <person name="Kumagai T."/>
            <person name="Asai K."/>
            <person name="Machida M."/>
            <person name="Nierman W.C."/>
            <person name="Denning D.W."/>
            <person name="Caddick M.X."/>
            <person name="Hynes M."/>
            <person name="Paoletti M."/>
            <person name="Fischer R."/>
            <person name="Miller B.L."/>
            <person name="Dyer P.S."/>
            <person name="Sachs M.S."/>
            <person name="Osmani S.A."/>
            <person name="Birren B.W."/>
        </authorList>
    </citation>
    <scope>NUCLEOTIDE SEQUENCE [LARGE SCALE GENOMIC DNA]</scope>
    <source>
        <strain>FGSC A4 / ATCC 38163 / CBS 112.46 / NRRL 194 / M139</strain>
    </source>
</reference>
<reference key="2">
    <citation type="journal article" date="2009" name="Fungal Genet. Biol.">
        <title>The 2008 update of the Aspergillus nidulans genome annotation: a community effort.</title>
        <authorList>
            <person name="Wortman J.R."/>
            <person name="Gilsenan J.M."/>
            <person name="Joardar V."/>
            <person name="Deegan J."/>
            <person name="Clutterbuck J."/>
            <person name="Andersen M.R."/>
            <person name="Archer D."/>
            <person name="Bencina M."/>
            <person name="Braus G."/>
            <person name="Coutinho P."/>
            <person name="von Dohren H."/>
            <person name="Doonan J."/>
            <person name="Driessen A.J."/>
            <person name="Durek P."/>
            <person name="Espeso E."/>
            <person name="Fekete E."/>
            <person name="Flipphi M."/>
            <person name="Estrada C.G."/>
            <person name="Geysens S."/>
            <person name="Goldman G."/>
            <person name="de Groot P.W."/>
            <person name="Hansen K."/>
            <person name="Harris S.D."/>
            <person name="Heinekamp T."/>
            <person name="Helmstaedt K."/>
            <person name="Henrissat B."/>
            <person name="Hofmann G."/>
            <person name="Homan T."/>
            <person name="Horio T."/>
            <person name="Horiuchi H."/>
            <person name="James S."/>
            <person name="Jones M."/>
            <person name="Karaffa L."/>
            <person name="Karanyi Z."/>
            <person name="Kato M."/>
            <person name="Keller N."/>
            <person name="Kelly D.E."/>
            <person name="Kiel J.A."/>
            <person name="Kim J.M."/>
            <person name="van der Klei I.J."/>
            <person name="Klis F.M."/>
            <person name="Kovalchuk A."/>
            <person name="Krasevec N."/>
            <person name="Kubicek C.P."/>
            <person name="Liu B."/>
            <person name="Maccabe A."/>
            <person name="Meyer V."/>
            <person name="Mirabito P."/>
            <person name="Miskei M."/>
            <person name="Mos M."/>
            <person name="Mullins J."/>
            <person name="Nelson D.R."/>
            <person name="Nielsen J."/>
            <person name="Oakley B.R."/>
            <person name="Osmani S.A."/>
            <person name="Pakula T."/>
            <person name="Paszewski A."/>
            <person name="Paulsen I."/>
            <person name="Pilsyk S."/>
            <person name="Pocsi I."/>
            <person name="Punt P.J."/>
            <person name="Ram A.F."/>
            <person name="Ren Q."/>
            <person name="Robellet X."/>
            <person name="Robson G."/>
            <person name="Seiboth B."/>
            <person name="van Solingen P."/>
            <person name="Specht T."/>
            <person name="Sun J."/>
            <person name="Taheri-Talesh N."/>
            <person name="Takeshita N."/>
            <person name="Ussery D."/>
            <person name="vanKuyk P.A."/>
            <person name="Visser H."/>
            <person name="van de Vondervoort P.J."/>
            <person name="de Vries R.P."/>
            <person name="Walton J."/>
            <person name="Xiang X."/>
            <person name="Xiong Y."/>
            <person name="Zeng A.P."/>
            <person name="Brandt B.W."/>
            <person name="Cornell M.J."/>
            <person name="van den Hondel C.A."/>
            <person name="Visser J."/>
            <person name="Oliver S.G."/>
            <person name="Turner G."/>
        </authorList>
    </citation>
    <scope>GENOME REANNOTATION</scope>
    <source>
        <strain>FGSC A4 / ATCC 38163 / CBS 112.46 / NRRL 194 / M139</strain>
    </source>
</reference>
<gene>
    <name type="primary">ubp16</name>
    <name type="ORF">AN11684</name>
</gene>
<protein>
    <recommendedName>
        <fullName>Ubiquitin carboxyl-terminal hydrolase 16</fullName>
        <ecNumber>3.4.19.12</ecNumber>
    </recommendedName>
    <alternativeName>
        <fullName>Deubiquitinating enzyme 16</fullName>
    </alternativeName>
    <alternativeName>
        <fullName>Ubiquitin thioesterase 16</fullName>
    </alternativeName>
    <alternativeName>
        <fullName>Ubiquitin-specific-processing protease 16</fullName>
    </alternativeName>
</protein>
<feature type="chain" id="PRO_0000376621" description="Ubiquitin carboxyl-terminal hydrolase 16">
    <location>
        <begin position="1"/>
        <end position="624"/>
    </location>
</feature>
<feature type="domain" description="USP">
    <location>
        <begin position="46"/>
        <end position="620"/>
    </location>
</feature>
<feature type="region of interest" description="Disordered" evidence="3">
    <location>
        <begin position="453"/>
        <end position="573"/>
    </location>
</feature>
<feature type="compositionally biased region" description="Low complexity" evidence="3">
    <location>
        <begin position="479"/>
        <end position="496"/>
    </location>
</feature>
<feature type="compositionally biased region" description="Polar residues" evidence="3">
    <location>
        <begin position="518"/>
        <end position="544"/>
    </location>
</feature>
<feature type="compositionally biased region" description="Low complexity" evidence="3">
    <location>
        <begin position="546"/>
        <end position="573"/>
    </location>
</feature>
<feature type="active site" description="Nucleophile" evidence="1 2">
    <location>
        <position position="55"/>
    </location>
</feature>
<feature type="active site" description="Proton acceptor" evidence="1 2">
    <location>
        <position position="424"/>
    </location>
</feature>
<name>UBP16_EMENI</name>
<comment type="catalytic activity">
    <reaction>
        <text>Thiol-dependent hydrolysis of ester, thioester, amide, peptide and isopeptide bonds formed by the C-terminal Gly of ubiquitin (a 76-residue protein attached to proteins as an intracellular targeting signal).</text>
        <dbReference type="EC" id="3.4.19.12"/>
    </reaction>
</comment>
<comment type="similarity">
    <text evidence="4">Belongs to the peptidase C19 family.</text>
</comment>
<comment type="sequence caution" evidence="4">
    <conflict type="erroneous gene model prediction">
        <sequence resource="EMBL-CDS" id="EAA63444"/>
    </conflict>
    <text>The predicted gene AN2873 has been split into 2 genes: AN2873 and AN11684.</text>
</comment>
<dbReference type="EC" id="3.4.19.12"/>
<dbReference type="EMBL" id="AACD01000051">
    <property type="protein sequence ID" value="EAA63444.1"/>
    <property type="status" value="ALT_SEQ"/>
    <property type="molecule type" value="Genomic_DNA"/>
</dbReference>
<dbReference type="EMBL" id="BN001306">
    <property type="status" value="NOT_ANNOTATED_CDS"/>
    <property type="molecule type" value="Genomic_DNA"/>
</dbReference>
<dbReference type="RefSeq" id="XP_660477.1">
    <property type="nucleotide sequence ID" value="XM_655385.1"/>
</dbReference>
<dbReference type="FunCoup" id="P0CAQ1">
    <property type="interactions" value="36"/>
</dbReference>
<dbReference type="STRING" id="227321.P0CAQ1"/>
<dbReference type="KEGG" id="ani:ANIA_02873"/>
<dbReference type="VEuPathDB" id="FungiDB:AN11684"/>
<dbReference type="HOGENOM" id="CLU_011238_0_0_1"/>
<dbReference type="InParanoid" id="P0CAQ1"/>
<dbReference type="OrthoDB" id="265306at2759"/>
<dbReference type="Proteomes" id="UP000000560">
    <property type="component" value="Chromosome VI"/>
</dbReference>
<dbReference type="GO" id="GO:0005829">
    <property type="term" value="C:cytosol"/>
    <property type="evidence" value="ECO:0000318"/>
    <property type="project" value="GO_Central"/>
</dbReference>
<dbReference type="GO" id="GO:0005634">
    <property type="term" value="C:nucleus"/>
    <property type="evidence" value="ECO:0000318"/>
    <property type="project" value="GO_Central"/>
</dbReference>
<dbReference type="GO" id="GO:0004843">
    <property type="term" value="F:cysteine-type deubiquitinase activity"/>
    <property type="evidence" value="ECO:0000318"/>
    <property type="project" value="GO_Central"/>
</dbReference>
<dbReference type="GO" id="GO:0016579">
    <property type="term" value="P:protein deubiquitination"/>
    <property type="evidence" value="ECO:0007669"/>
    <property type="project" value="InterPro"/>
</dbReference>
<dbReference type="GO" id="GO:0006508">
    <property type="term" value="P:proteolysis"/>
    <property type="evidence" value="ECO:0007669"/>
    <property type="project" value="UniProtKB-KW"/>
</dbReference>
<dbReference type="GO" id="GO:0031647">
    <property type="term" value="P:regulation of protein stability"/>
    <property type="evidence" value="ECO:0000318"/>
    <property type="project" value="GO_Central"/>
</dbReference>
<dbReference type="CDD" id="cd02662">
    <property type="entry name" value="Peptidase_C19F"/>
    <property type="match status" value="1"/>
</dbReference>
<dbReference type="Gene3D" id="3.90.70.10">
    <property type="entry name" value="Cysteine proteinases"/>
    <property type="match status" value="1"/>
</dbReference>
<dbReference type="InterPro" id="IPR038765">
    <property type="entry name" value="Papain-like_cys_pep_sf"/>
</dbReference>
<dbReference type="InterPro" id="IPR050164">
    <property type="entry name" value="Peptidase_C19"/>
</dbReference>
<dbReference type="InterPro" id="IPR001394">
    <property type="entry name" value="Peptidase_C19_UCH"/>
</dbReference>
<dbReference type="InterPro" id="IPR018200">
    <property type="entry name" value="USP_CS"/>
</dbReference>
<dbReference type="InterPro" id="IPR028889">
    <property type="entry name" value="USP_dom"/>
</dbReference>
<dbReference type="PANTHER" id="PTHR24006">
    <property type="entry name" value="UBIQUITIN CARBOXYL-TERMINAL HYDROLASE"/>
    <property type="match status" value="1"/>
</dbReference>
<dbReference type="PANTHER" id="PTHR24006:SF904">
    <property type="entry name" value="UBIQUITIN CARBOXYL-TERMINAL HYDROLASE 16"/>
    <property type="match status" value="1"/>
</dbReference>
<dbReference type="Pfam" id="PF00443">
    <property type="entry name" value="UCH"/>
    <property type="match status" value="1"/>
</dbReference>
<dbReference type="SUPFAM" id="SSF54001">
    <property type="entry name" value="Cysteine proteinases"/>
    <property type="match status" value="1"/>
</dbReference>
<dbReference type="PROSITE" id="PS00972">
    <property type="entry name" value="USP_1"/>
    <property type="match status" value="1"/>
</dbReference>
<dbReference type="PROSITE" id="PS00973">
    <property type="entry name" value="USP_2"/>
    <property type="match status" value="1"/>
</dbReference>
<dbReference type="PROSITE" id="PS50235">
    <property type="entry name" value="USP_3"/>
    <property type="match status" value="1"/>
</dbReference>
<keyword id="KW-0378">Hydrolase</keyword>
<keyword id="KW-0645">Protease</keyword>
<keyword id="KW-1185">Reference proteome</keyword>
<keyword id="KW-0788">Thiol protease</keyword>
<keyword id="KW-0833">Ubl conjugation pathway</keyword>
<accession>P0CAQ1</accession>
<accession>Q5B9A7</accession>
<sequence length="624" mass="69446">MQEKPTTVAAYAAGASLAAVALFYVFGPNYTIDGDEAGGNRKKSIVGLSNPANDCFINSVLQALAGLGDLRLYLIRELHRRELDGPEIYNQLPGPEEADQLREKRPDRIRELQQGTITRALKEMLDRLNERPIYKKTISARAFIQALEFAYRTRISRNQQDAQEFLQIVAERLSDEYHAGVKARQRAEKSIEFNPYQEREEAPSEIEVRLDDGTENGLPAIIDTKLKEIDNEYGFPFEGKLESQIECQFCHYKYKPNQTSFVNLTLQVPQRSSTTLNACFDGLLKTEYIDDFRCDKCRLLHAIEVKSNALVKAGSATDRQRLEAEIEKIQLALSSDPENALDGVTLPPAELAPKRRIARHMRITVFPKIIAIHLSRSMFDRSGSTKNAAKVAFPERLPLGGILSQKWFKLLAIVCHKGSHNSGHYESFRRNHLYPPYSTPSVFSSYAQSRAASENPSRVASPRLPASSSSTEPPALNISPPASTSTNSPLSLTPDSPSRPPSATDLKSPRPTTSSSRVSFQSTHSSSKQTISPTSAARNSSSLDTARLSSPASRSSLAERNASATDTEASASASLASRIRRRRKTADRWWRISDEKIKECKTSDVLGMQKEVYLLFYEIEKSGS</sequence>
<proteinExistence type="inferred from homology"/>
<organism>
    <name type="scientific">Emericella nidulans (strain FGSC A4 / ATCC 38163 / CBS 112.46 / NRRL 194 / M139)</name>
    <name type="common">Aspergillus nidulans</name>
    <dbReference type="NCBI Taxonomy" id="227321"/>
    <lineage>
        <taxon>Eukaryota</taxon>
        <taxon>Fungi</taxon>
        <taxon>Dikarya</taxon>
        <taxon>Ascomycota</taxon>
        <taxon>Pezizomycotina</taxon>
        <taxon>Eurotiomycetes</taxon>
        <taxon>Eurotiomycetidae</taxon>
        <taxon>Eurotiales</taxon>
        <taxon>Aspergillaceae</taxon>
        <taxon>Aspergillus</taxon>
        <taxon>Aspergillus subgen. Nidulantes</taxon>
    </lineage>
</organism>